<proteinExistence type="inferred from homology"/>
<comment type="similarity">
    <text evidence="1">Belongs to the universal ribosomal protein uL16 family.</text>
</comment>
<comment type="sequence caution" evidence="2">
    <conflict type="erroneous initiation">
        <sequence resource="EMBL-CDS" id="CAC12185"/>
    </conflict>
</comment>
<dbReference type="EMBL" id="AB206999">
    <property type="protein sequence ID" value="BAE53570.1"/>
    <property type="molecule type" value="Genomic_DNA"/>
</dbReference>
<dbReference type="EMBL" id="AL445066">
    <property type="protein sequence ID" value="CAC12185.1"/>
    <property type="status" value="ALT_INIT"/>
    <property type="molecule type" value="Genomic_DNA"/>
</dbReference>
<dbReference type="RefSeq" id="WP_010901468.1">
    <property type="nucleotide sequence ID" value="NC_002578.1"/>
</dbReference>
<dbReference type="SMR" id="Q9HJB3"/>
<dbReference type="FunCoup" id="Q9HJB3">
    <property type="interactions" value="152"/>
</dbReference>
<dbReference type="STRING" id="273075.gene:9572277"/>
<dbReference type="PaxDb" id="273075-Ta1057m"/>
<dbReference type="EnsemblBacteria" id="CAC12185">
    <property type="protein sequence ID" value="CAC12185"/>
    <property type="gene ID" value="CAC12185"/>
</dbReference>
<dbReference type="KEGG" id="tac:Ta1057"/>
<dbReference type="eggNOG" id="arCOG04113">
    <property type="taxonomic scope" value="Archaea"/>
</dbReference>
<dbReference type="HOGENOM" id="CLU_084051_0_2_2"/>
<dbReference type="InParanoid" id="Q9HJB3"/>
<dbReference type="OrthoDB" id="30538at2157"/>
<dbReference type="Proteomes" id="UP000001024">
    <property type="component" value="Chromosome"/>
</dbReference>
<dbReference type="GO" id="GO:1990904">
    <property type="term" value="C:ribonucleoprotein complex"/>
    <property type="evidence" value="ECO:0007669"/>
    <property type="project" value="UniProtKB-KW"/>
</dbReference>
<dbReference type="GO" id="GO:0005840">
    <property type="term" value="C:ribosome"/>
    <property type="evidence" value="ECO:0007669"/>
    <property type="project" value="UniProtKB-KW"/>
</dbReference>
<dbReference type="GO" id="GO:0003735">
    <property type="term" value="F:structural constituent of ribosome"/>
    <property type="evidence" value="ECO:0007669"/>
    <property type="project" value="InterPro"/>
</dbReference>
<dbReference type="GO" id="GO:0006412">
    <property type="term" value="P:translation"/>
    <property type="evidence" value="ECO:0007669"/>
    <property type="project" value="UniProtKB-UniRule"/>
</dbReference>
<dbReference type="CDD" id="cd01433">
    <property type="entry name" value="Ribosomal_L16_L10e"/>
    <property type="match status" value="1"/>
</dbReference>
<dbReference type="Gene3D" id="3.90.1170.10">
    <property type="entry name" value="Ribosomal protein L10e/L16"/>
    <property type="match status" value="1"/>
</dbReference>
<dbReference type="HAMAP" id="MF_00448">
    <property type="entry name" value="Ribosomal_uL16_arch"/>
    <property type="match status" value="1"/>
</dbReference>
<dbReference type="InterPro" id="IPR047873">
    <property type="entry name" value="Ribosomal_uL16"/>
</dbReference>
<dbReference type="InterPro" id="IPR022981">
    <property type="entry name" value="Ribosomal_uL16_arc"/>
</dbReference>
<dbReference type="InterPro" id="IPR018255">
    <property type="entry name" value="Ribosomal_uL16_CS_euk_arc"/>
</dbReference>
<dbReference type="InterPro" id="IPR016180">
    <property type="entry name" value="Ribosomal_uL16_dom"/>
</dbReference>
<dbReference type="InterPro" id="IPR001197">
    <property type="entry name" value="Ribosomal_uL16_euk_arch"/>
</dbReference>
<dbReference type="InterPro" id="IPR036920">
    <property type="entry name" value="Ribosomal_uL16_sf"/>
</dbReference>
<dbReference type="NCBIfam" id="NF003239">
    <property type="entry name" value="PRK04199.1-4"/>
    <property type="match status" value="1"/>
</dbReference>
<dbReference type="PANTHER" id="PTHR11726">
    <property type="entry name" value="60S RIBOSOMAL PROTEIN L10"/>
    <property type="match status" value="1"/>
</dbReference>
<dbReference type="Pfam" id="PF00252">
    <property type="entry name" value="Ribosomal_L16"/>
    <property type="match status" value="1"/>
</dbReference>
<dbReference type="PIRSF" id="PIRSF005590">
    <property type="entry name" value="Ribosomal_L10"/>
    <property type="match status" value="1"/>
</dbReference>
<dbReference type="SUPFAM" id="SSF54686">
    <property type="entry name" value="Ribosomal protein L16p/L10e"/>
    <property type="match status" value="1"/>
</dbReference>
<dbReference type="PROSITE" id="PS01257">
    <property type="entry name" value="RIBOSOMAL_L10E"/>
    <property type="match status" value="1"/>
</dbReference>
<accession>Q9HJB3</accession>
<accession>Q2WG91</accession>
<name>RL10E_THEAC</name>
<protein>
    <recommendedName>
        <fullName evidence="1">Large ribosomal subunit protein uL16</fullName>
    </recommendedName>
    <alternativeName>
        <fullName evidence="2">50S ribosomal protein L10e</fullName>
    </alternativeName>
</protein>
<organism>
    <name type="scientific">Thermoplasma acidophilum (strain ATCC 25905 / DSM 1728 / JCM 9062 / NBRC 15155 / AMRC-C165)</name>
    <dbReference type="NCBI Taxonomy" id="273075"/>
    <lineage>
        <taxon>Archaea</taxon>
        <taxon>Methanobacteriati</taxon>
        <taxon>Thermoplasmatota</taxon>
        <taxon>Thermoplasmata</taxon>
        <taxon>Thermoplasmatales</taxon>
        <taxon>Thermoplasmataceae</taxon>
        <taxon>Thermoplasma</taxon>
    </lineage>
</organism>
<evidence type="ECO:0000255" key="1">
    <source>
        <dbReference type="HAMAP-Rule" id="MF_00448"/>
    </source>
</evidence>
<evidence type="ECO:0000305" key="2"/>
<feature type="chain" id="PRO_0000147150" description="Large ribosomal subunit protein uL16">
    <location>
        <begin position="1"/>
        <end position="176"/>
    </location>
</feature>
<reference key="1">
    <citation type="journal article" date="2005" name="J. Bacteriol.">
        <title>Characterization of the DNA gyrase from the thermoacidophilic archaeon Thermoplasma acidophilum.</title>
        <authorList>
            <person name="Yamashiro K."/>
            <person name="Yamagishi A."/>
        </authorList>
    </citation>
    <scope>NUCLEOTIDE SEQUENCE [GENOMIC DNA]</scope>
    <source>
        <strain>HO-62N1C</strain>
    </source>
</reference>
<reference key="2">
    <citation type="journal article" date="2000" name="Nature">
        <title>The genome sequence of the thermoacidophilic scavenger Thermoplasma acidophilum.</title>
        <authorList>
            <person name="Ruepp A."/>
            <person name="Graml W."/>
            <person name="Santos-Martinez M.-L."/>
            <person name="Koretke K.K."/>
            <person name="Volker C."/>
            <person name="Mewes H.-W."/>
            <person name="Frishman D."/>
            <person name="Stocker S."/>
            <person name="Lupas A.N."/>
            <person name="Baumeister W."/>
        </authorList>
    </citation>
    <scope>NUCLEOTIDE SEQUENCE [LARGE SCALE GENOMIC DNA]</scope>
    <source>
        <strain>ATCC 25905 / DSM 1728 / JCM 9062 / NBRC 15155 / AMRC-C165</strain>
    </source>
</reference>
<sequence>MVTKPARMYSRITGPAYTRKEFMGGVPYPKITTFVQGNQKKDFPIEMRLVAEEPCQIRHTALEAARVSVNRRMTEAAGLDYFYLKVVPYPHHVLREHKMATGAGADRISSGMRAAFGRPVGTAARVYPDDVIMIARTDEAHAKELKTALRKAAIKLPTPCKVVITKGKEIAGSLGI</sequence>
<gene>
    <name evidence="1" type="primary">rpl10e</name>
    <name type="ordered locus">Ta1057</name>
</gene>
<keyword id="KW-1185">Reference proteome</keyword>
<keyword id="KW-0687">Ribonucleoprotein</keyword>
<keyword id="KW-0689">Ribosomal protein</keyword>